<protein>
    <recommendedName>
        <fullName evidence="1 6">NH(3)-dependent NAD(+) synthetase</fullName>
        <ecNumber evidence="1 4">6.3.1.5</ecNumber>
    </recommendedName>
    <alternativeName>
        <fullName>Nicotinamide adenine dinucleotide synthetase</fullName>
        <shortName>NADS</shortName>
    </alternativeName>
    <alternativeName>
        <fullName>Nitrogen regulatory protein</fullName>
    </alternativeName>
</protein>
<comment type="function">
    <text evidence="1 4">Catalyzes the ATP-dependent amidation of deamido-NAD to form NAD. Uses ammonia as a nitrogen source.</text>
</comment>
<comment type="catalytic activity">
    <reaction evidence="1 4">
        <text>deamido-NAD(+) + NH4(+) + ATP = AMP + diphosphate + NAD(+) + H(+)</text>
        <dbReference type="Rhea" id="RHEA:21188"/>
        <dbReference type="ChEBI" id="CHEBI:15378"/>
        <dbReference type="ChEBI" id="CHEBI:28938"/>
        <dbReference type="ChEBI" id="CHEBI:30616"/>
        <dbReference type="ChEBI" id="CHEBI:33019"/>
        <dbReference type="ChEBI" id="CHEBI:57540"/>
        <dbReference type="ChEBI" id="CHEBI:58437"/>
        <dbReference type="ChEBI" id="CHEBI:456215"/>
        <dbReference type="EC" id="6.3.1.5"/>
    </reaction>
</comment>
<comment type="pathway">
    <text evidence="1">Cofactor biosynthesis; NAD(+) biosynthesis; NAD(+) from deamido-NAD(+) (ammonia route): step 1/1.</text>
</comment>
<comment type="subunit">
    <text evidence="1 2 3">Homodimer.</text>
</comment>
<comment type="interaction">
    <interactant intactId="EBI-548960">
        <id>P18843</id>
    </interactant>
    <interactant intactId="EBI-548951">
        <id>P03004</id>
        <label>dnaA</label>
    </interactant>
    <organismsDiffer>false</organismsDiffer>
    <experiments>3</experiments>
</comment>
<comment type="PTM">
    <text>May be phosphorylated.</text>
</comment>
<comment type="similarity">
    <text evidence="1 7">Belongs to the NAD synthetase family.</text>
</comment>
<evidence type="ECO:0000255" key="1">
    <source>
        <dbReference type="HAMAP-Rule" id="MF_00193"/>
    </source>
</evidence>
<evidence type="ECO:0000269" key="2">
    <source>
    </source>
</evidence>
<evidence type="ECO:0000269" key="3">
    <source>
    </source>
</evidence>
<evidence type="ECO:0000269" key="4">
    <source>
    </source>
</evidence>
<evidence type="ECO:0000303" key="5">
    <source>
    </source>
</evidence>
<evidence type="ECO:0000303" key="6">
    <source>
    </source>
</evidence>
<evidence type="ECO:0000305" key="7"/>
<evidence type="ECO:0007744" key="8">
    <source>
        <dbReference type="PDB" id="1WXE"/>
    </source>
</evidence>
<evidence type="ECO:0007744" key="9">
    <source>
        <dbReference type="PDB" id="1WXF"/>
    </source>
</evidence>
<evidence type="ECO:0007744" key="10">
    <source>
        <dbReference type="PDB" id="1WXG"/>
    </source>
</evidence>
<evidence type="ECO:0007744" key="11">
    <source>
        <dbReference type="PDB" id="1WXH"/>
    </source>
</evidence>
<evidence type="ECO:0007744" key="12">
    <source>
        <dbReference type="PDB" id="1WXI"/>
    </source>
</evidence>
<evidence type="ECO:0007829" key="13">
    <source>
        <dbReference type="PDB" id="1WXI"/>
    </source>
</evidence>
<gene>
    <name evidence="1 6" type="primary">nadE</name>
    <name evidence="5" type="synonym">efg</name>
    <name type="synonym">ntrL</name>
    <name type="ordered locus">b1740</name>
    <name type="ordered locus">JW1729</name>
</gene>
<name>NADE_ECOLI</name>
<sequence>MTLQQQIIKALGAKPQINAEEEIRRSVDFLKSYLQTYPFIKSLVLGISGGQDSTLAGKLCQMAINELRLETGNESLQFIAVRLPYGVQADEQDCQDAIAFIQPDRVLTVNIKGAVLASEQALREAGIELSDFVRGNEKARERMKAQYSIAGMTSGVVVGTDHAAEAITGFFTKYGDGGTDINPLYRLNKRQGKQLLAALACPEHLYKKAPTADLEDDRPSLPDEVALGVTYDNIDDYLEGKNVPQQVARTIENWYLKTEHKRRPPITVFDDFWKK</sequence>
<accession>P18843</accession>
<accession>P78235</accession>
<organism>
    <name type="scientific">Escherichia coli (strain K12)</name>
    <dbReference type="NCBI Taxonomy" id="83333"/>
    <lineage>
        <taxon>Bacteria</taxon>
        <taxon>Pseudomonadati</taxon>
        <taxon>Pseudomonadota</taxon>
        <taxon>Gammaproteobacteria</taxon>
        <taxon>Enterobacterales</taxon>
        <taxon>Enterobacteriaceae</taxon>
        <taxon>Escherichia</taxon>
    </lineage>
</organism>
<proteinExistence type="evidence at protein level"/>
<dbReference type="EC" id="6.3.1.5" evidence="1 4"/>
<dbReference type="EMBL" id="M15328">
    <property type="protein sequence ID" value="AAA79852.1"/>
    <property type="molecule type" value="Genomic_DNA"/>
</dbReference>
<dbReference type="EMBL" id="U00096">
    <property type="protein sequence ID" value="AAC74810.1"/>
    <property type="molecule type" value="Genomic_DNA"/>
</dbReference>
<dbReference type="EMBL" id="AP009048">
    <property type="protein sequence ID" value="BAA15529.1"/>
    <property type="molecule type" value="Genomic_DNA"/>
</dbReference>
<dbReference type="PIR" id="D64933">
    <property type="entry name" value="D64933"/>
</dbReference>
<dbReference type="RefSeq" id="NP_416254.1">
    <property type="nucleotide sequence ID" value="NC_000913.3"/>
</dbReference>
<dbReference type="RefSeq" id="WP_000175026.1">
    <property type="nucleotide sequence ID" value="NZ_SSZK01000001.1"/>
</dbReference>
<dbReference type="PDB" id="1WXE">
    <property type="method" value="X-ray"/>
    <property type="resolution" value="1.90 A"/>
    <property type="chains" value="A=1-275"/>
</dbReference>
<dbReference type="PDB" id="1WXF">
    <property type="method" value="X-ray"/>
    <property type="resolution" value="2.30 A"/>
    <property type="chains" value="A=1-275"/>
</dbReference>
<dbReference type="PDB" id="1WXG">
    <property type="method" value="X-ray"/>
    <property type="resolution" value="1.90 A"/>
    <property type="chains" value="A=1-275"/>
</dbReference>
<dbReference type="PDB" id="1WXH">
    <property type="method" value="X-ray"/>
    <property type="resolution" value="1.90 A"/>
    <property type="chains" value="A=1-275"/>
</dbReference>
<dbReference type="PDB" id="1WXI">
    <property type="method" value="X-ray"/>
    <property type="resolution" value="1.70 A"/>
    <property type="chains" value="A=1-275"/>
</dbReference>
<dbReference type="PDBsum" id="1WXE"/>
<dbReference type="PDBsum" id="1WXF"/>
<dbReference type="PDBsum" id="1WXG"/>
<dbReference type="PDBsum" id="1WXH"/>
<dbReference type="PDBsum" id="1WXI"/>
<dbReference type="SMR" id="P18843"/>
<dbReference type="BioGRID" id="4262229">
    <property type="interactions" value="543"/>
</dbReference>
<dbReference type="BioGRID" id="851285">
    <property type="interactions" value="4"/>
</dbReference>
<dbReference type="DIP" id="DIP-10295N"/>
<dbReference type="FunCoup" id="P18843">
    <property type="interactions" value="1202"/>
</dbReference>
<dbReference type="IntAct" id="P18843">
    <property type="interactions" value="479"/>
</dbReference>
<dbReference type="STRING" id="511145.b1740"/>
<dbReference type="DrugBank" id="DB04099">
    <property type="generic name" value="Deamido-Nad"/>
</dbReference>
<dbReference type="DrugBank" id="DB02937">
    <property type="generic name" value="Gamma-Arsono-Beta, Gamma-Methyleneadenosine-5'-Diphosphate"/>
</dbReference>
<dbReference type="DrugCentral" id="P18843"/>
<dbReference type="jPOST" id="P18843"/>
<dbReference type="PaxDb" id="511145-b1740"/>
<dbReference type="EnsemblBacteria" id="AAC74810">
    <property type="protein sequence ID" value="AAC74810"/>
    <property type="gene ID" value="b1740"/>
</dbReference>
<dbReference type="GeneID" id="946946"/>
<dbReference type="KEGG" id="ecj:JW1729"/>
<dbReference type="KEGG" id="eco:b1740"/>
<dbReference type="KEGG" id="ecoc:C3026_09940"/>
<dbReference type="PATRIC" id="fig|1411691.4.peg.516"/>
<dbReference type="EchoBASE" id="EB0657"/>
<dbReference type="eggNOG" id="COG0171">
    <property type="taxonomic scope" value="Bacteria"/>
</dbReference>
<dbReference type="HOGENOM" id="CLU_059327_3_0_6"/>
<dbReference type="InParanoid" id="P18843"/>
<dbReference type="OMA" id="FCARLRM"/>
<dbReference type="OrthoDB" id="3266517at2"/>
<dbReference type="PhylomeDB" id="P18843"/>
<dbReference type="BioCyc" id="EcoCyc:NAD-SYNTH-MONOMER"/>
<dbReference type="BioCyc" id="MetaCyc:NAD-SYNTH-MONOMER"/>
<dbReference type="UniPathway" id="UPA00253">
    <property type="reaction ID" value="UER00333"/>
</dbReference>
<dbReference type="EvolutionaryTrace" id="P18843"/>
<dbReference type="PRO" id="PR:P18843"/>
<dbReference type="Proteomes" id="UP000000625">
    <property type="component" value="Chromosome"/>
</dbReference>
<dbReference type="GO" id="GO:0005829">
    <property type="term" value="C:cytosol"/>
    <property type="evidence" value="ECO:0000314"/>
    <property type="project" value="EcoCyc"/>
</dbReference>
<dbReference type="GO" id="GO:0005524">
    <property type="term" value="F:ATP binding"/>
    <property type="evidence" value="ECO:0007669"/>
    <property type="project" value="UniProtKB-UniRule"/>
</dbReference>
<dbReference type="GO" id="GO:0004359">
    <property type="term" value="F:glutaminase activity"/>
    <property type="evidence" value="ECO:0007669"/>
    <property type="project" value="InterPro"/>
</dbReference>
<dbReference type="GO" id="GO:0000287">
    <property type="term" value="F:magnesium ion binding"/>
    <property type="evidence" value="ECO:0000314"/>
    <property type="project" value="EcoCyc"/>
</dbReference>
<dbReference type="GO" id="GO:0003952">
    <property type="term" value="F:NAD+ synthase (glutamine-hydrolyzing) activity"/>
    <property type="evidence" value="ECO:0007669"/>
    <property type="project" value="InterPro"/>
</dbReference>
<dbReference type="GO" id="GO:0008795">
    <property type="term" value="F:NAD+ synthase activity"/>
    <property type="evidence" value="ECO:0000314"/>
    <property type="project" value="EcoCyc"/>
</dbReference>
<dbReference type="GO" id="GO:0042803">
    <property type="term" value="F:protein homodimerization activity"/>
    <property type="evidence" value="ECO:0000314"/>
    <property type="project" value="EcoCyc"/>
</dbReference>
<dbReference type="GO" id="GO:0034628">
    <property type="term" value="P:'de novo' NAD biosynthetic process from L-aspartate"/>
    <property type="evidence" value="ECO:0000314"/>
    <property type="project" value="EcoCyc"/>
</dbReference>
<dbReference type="GO" id="GO:0006974">
    <property type="term" value="P:DNA damage response"/>
    <property type="evidence" value="ECO:0000270"/>
    <property type="project" value="EcoliWiki"/>
</dbReference>
<dbReference type="GO" id="GO:0034355">
    <property type="term" value="P:NAD biosynthetic process via the salvage pathway"/>
    <property type="evidence" value="ECO:0000314"/>
    <property type="project" value="EcoCyc"/>
</dbReference>
<dbReference type="CDD" id="cd00553">
    <property type="entry name" value="NAD_synthase"/>
    <property type="match status" value="1"/>
</dbReference>
<dbReference type="FunFam" id="3.40.50.620:FF:000015">
    <property type="entry name" value="NH(3)-dependent NAD(+) synthetase"/>
    <property type="match status" value="1"/>
</dbReference>
<dbReference type="Gene3D" id="3.40.50.620">
    <property type="entry name" value="HUPs"/>
    <property type="match status" value="1"/>
</dbReference>
<dbReference type="HAMAP" id="MF_00193">
    <property type="entry name" value="NadE_ammonia_dep"/>
    <property type="match status" value="1"/>
</dbReference>
<dbReference type="InterPro" id="IPR022310">
    <property type="entry name" value="NAD/GMP_synthase"/>
</dbReference>
<dbReference type="InterPro" id="IPR003694">
    <property type="entry name" value="NAD_synthase"/>
</dbReference>
<dbReference type="InterPro" id="IPR022926">
    <property type="entry name" value="NH(3)-dep_NAD(+)_synth"/>
</dbReference>
<dbReference type="InterPro" id="IPR014729">
    <property type="entry name" value="Rossmann-like_a/b/a_fold"/>
</dbReference>
<dbReference type="NCBIfam" id="TIGR00552">
    <property type="entry name" value="nadE"/>
    <property type="match status" value="1"/>
</dbReference>
<dbReference type="NCBIfam" id="NF001979">
    <property type="entry name" value="PRK00768.1"/>
    <property type="match status" value="1"/>
</dbReference>
<dbReference type="PANTHER" id="PTHR23090">
    <property type="entry name" value="NH 3 /GLUTAMINE-DEPENDENT NAD + SYNTHETASE"/>
    <property type="match status" value="1"/>
</dbReference>
<dbReference type="PANTHER" id="PTHR23090:SF7">
    <property type="entry name" value="NH(3)-DEPENDENT NAD(+) SYNTHETASE"/>
    <property type="match status" value="1"/>
</dbReference>
<dbReference type="Pfam" id="PF02540">
    <property type="entry name" value="NAD_synthase"/>
    <property type="match status" value="1"/>
</dbReference>
<dbReference type="SUPFAM" id="SSF52402">
    <property type="entry name" value="Adenine nucleotide alpha hydrolases-like"/>
    <property type="match status" value="1"/>
</dbReference>
<keyword id="KW-0002">3D-structure</keyword>
<keyword id="KW-0067">ATP-binding</keyword>
<keyword id="KW-0903">Direct protein sequencing</keyword>
<keyword id="KW-0436">Ligase</keyword>
<keyword id="KW-0460">Magnesium</keyword>
<keyword id="KW-0479">Metal-binding</keyword>
<keyword id="KW-0520">NAD</keyword>
<keyword id="KW-0547">Nucleotide-binding</keyword>
<keyword id="KW-0597">Phosphoprotein</keyword>
<keyword id="KW-1185">Reference proteome</keyword>
<reference key="1">
    <citation type="journal article" date="1987" name="J. Bacteriol.">
        <title>Complementation of nitrogen-regulatory (ntr-like) mutations in Rhodobacter capsulatus by an Escherichia coli gene: cloning and sequencing of the gene and characterization of the gene product.</title>
        <authorList>
            <person name="Allibert P."/>
            <person name="Willison J.C."/>
            <person name="Vignais P.M."/>
        </authorList>
    </citation>
    <scope>NUCLEOTIDE SEQUENCE [GENOMIC DNA]</scope>
    <scope>SUBUNIT</scope>
</reference>
<reference key="2">
    <citation type="journal article" date="1996" name="DNA Res.">
        <title>A 570-kb DNA sequence of the Escherichia coli K-12 genome corresponding to the 28.0-40.1 min region on the linkage map.</title>
        <authorList>
            <person name="Aiba H."/>
            <person name="Baba T."/>
            <person name="Fujita K."/>
            <person name="Hayashi K."/>
            <person name="Inada T."/>
            <person name="Isono K."/>
            <person name="Itoh T."/>
            <person name="Kasai H."/>
            <person name="Kashimoto K."/>
            <person name="Kimura S."/>
            <person name="Kitakawa M."/>
            <person name="Kitagawa M."/>
            <person name="Makino K."/>
            <person name="Miki T."/>
            <person name="Mizobuchi K."/>
            <person name="Mori H."/>
            <person name="Mori T."/>
            <person name="Motomura K."/>
            <person name="Nakade S."/>
            <person name="Nakamura Y."/>
            <person name="Nashimoto H."/>
            <person name="Nishio Y."/>
            <person name="Oshima T."/>
            <person name="Saito N."/>
            <person name="Sampei G."/>
            <person name="Seki Y."/>
            <person name="Sivasundaram S."/>
            <person name="Tagami H."/>
            <person name="Takeda J."/>
            <person name="Takemoto K."/>
            <person name="Takeuchi Y."/>
            <person name="Wada C."/>
            <person name="Yamamoto Y."/>
            <person name="Horiuchi T."/>
        </authorList>
    </citation>
    <scope>NUCLEOTIDE SEQUENCE [LARGE SCALE GENOMIC DNA]</scope>
    <source>
        <strain>K12 / W3110 / ATCC 27325 / DSM 5911</strain>
    </source>
</reference>
<reference key="3">
    <citation type="journal article" date="1997" name="Science">
        <title>The complete genome sequence of Escherichia coli K-12.</title>
        <authorList>
            <person name="Blattner F.R."/>
            <person name="Plunkett G. III"/>
            <person name="Bloch C.A."/>
            <person name="Perna N.T."/>
            <person name="Burland V."/>
            <person name="Riley M."/>
            <person name="Collado-Vides J."/>
            <person name="Glasner J.D."/>
            <person name="Rode C.K."/>
            <person name="Mayhew G.F."/>
            <person name="Gregor J."/>
            <person name="Davis N.W."/>
            <person name="Kirkpatrick H.A."/>
            <person name="Goeden M.A."/>
            <person name="Rose D.J."/>
            <person name="Mau B."/>
            <person name="Shao Y."/>
        </authorList>
    </citation>
    <scope>NUCLEOTIDE SEQUENCE [LARGE SCALE GENOMIC DNA]</scope>
    <source>
        <strain>K12 / MG1655 / ATCC 47076</strain>
    </source>
</reference>
<reference key="4">
    <citation type="journal article" date="2006" name="Mol. Syst. Biol.">
        <title>Highly accurate genome sequences of Escherichia coli K-12 strains MG1655 and W3110.</title>
        <authorList>
            <person name="Hayashi K."/>
            <person name="Morooka N."/>
            <person name="Yamamoto Y."/>
            <person name="Fujita K."/>
            <person name="Isono K."/>
            <person name="Choi S."/>
            <person name="Ohtsubo E."/>
            <person name="Baba T."/>
            <person name="Wanner B.L."/>
            <person name="Mori H."/>
            <person name="Horiuchi T."/>
        </authorList>
    </citation>
    <scope>NUCLEOTIDE SEQUENCE [LARGE SCALE GENOMIC DNA]</scope>
    <source>
        <strain>K12 / W3110 / ATCC 27325 / DSM 5911</strain>
    </source>
</reference>
<reference key="5">
    <citation type="journal article" date="1997" name="Electrophoresis">
        <title>Comparing the predicted and observed properties of proteins encoded in the genome of Escherichia coli K-12.</title>
        <authorList>
            <person name="Link A.J."/>
            <person name="Robison K."/>
            <person name="Church G.M."/>
        </authorList>
    </citation>
    <scope>PROTEIN SEQUENCE OF 1-12</scope>
    <source>
        <strain>K12 / EMG2</strain>
    </source>
</reference>
<reference key="6">
    <citation type="journal article" date="1992" name="J. Bacteriol.">
        <title>An essential gene (efg) located at 38.1 minutes on the Escherichia coli chromosome.</title>
        <authorList>
            <person name="Willison J.C."/>
        </authorList>
    </citation>
    <scope>GENE MAPPING</scope>
</reference>
<reference key="7">
    <citation type="journal article" date="1994" name="J. Bacteriol.">
        <title>The Escherichia coli efg gene and the Rhodobacter capsulatus adgA gene code for NH3-dependent NAD synthetase.</title>
        <authorList>
            <person name="Willison J.C."/>
            <person name="Tissot G."/>
        </authorList>
    </citation>
    <scope>FUNCTION</scope>
    <scope>CATALYTIC ACTIVITY</scope>
</reference>
<reference evidence="8 9 10 11 12" key="8">
    <citation type="journal article" date="2005" name="J. Biol. Chem.">
        <title>Structures of Escherichia coli NAD synthetase with substrates and products reveal mechanistic rearrangements.</title>
        <authorList>
            <person name="Jauch R."/>
            <person name="Humm A."/>
            <person name="Huber R."/>
            <person name="Wahl M.C."/>
        </authorList>
    </citation>
    <scope>X-RAY CRYSTALLOGRAPHY (1.7 ANGSTROMS) OF APOPROTEIN AND COMPLEX WITH AMP; NAD AND DIPHOSPHATE</scope>
    <scope>SUBUNIT</scope>
</reference>
<feature type="chain" id="PRO_0000152167" description="NH(3)-dependent NAD(+) synthetase">
    <location>
        <begin position="1"/>
        <end position="275"/>
    </location>
</feature>
<feature type="binding site" evidence="2 10">
    <location>
        <position position="33"/>
    </location>
    <ligand>
        <name>deamido-NAD(+)</name>
        <dbReference type="ChEBI" id="CHEBI:58437"/>
    </ligand>
</feature>
<feature type="binding site" evidence="1 2 8 12">
    <location>
        <begin position="46"/>
        <end position="53"/>
    </location>
    <ligand>
        <name>ATP</name>
        <dbReference type="ChEBI" id="CHEBI:30616"/>
    </ligand>
</feature>
<feature type="binding site" evidence="1 2 10 11">
    <location>
        <position position="52"/>
    </location>
    <ligand>
        <name>Mg(2+)</name>
        <dbReference type="ChEBI" id="CHEBI:18420"/>
    </ligand>
</feature>
<feature type="binding site" evidence="2 8 12">
    <location>
        <position position="82"/>
    </location>
    <ligand>
        <name>ATP</name>
        <dbReference type="ChEBI" id="CHEBI:30616"/>
    </ligand>
</feature>
<feature type="binding site" evidence="2 12">
    <location>
        <position position="88"/>
    </location>
    <ligand>
        <name>ATP</name>
        <dbReference type="ChEBI" id="CHEBI:30616"/>
    </ligand>
</feature>
<feature type="binding site" evidence="2 11">
    <location>
        <position position="136"/>
    </location>
    <ligand>
        <name>deamido-NAD(+)</name>
        <dbReference type="ChEBI" id="CHEBI:58437"/>
    </ligand>
</feature>
<feature type="binding site" evidence="1 2 8 10 11 12">
    <location>
        <position position="140"/>
    </location>
    <ligand>
        <name>deamido-NAD(+)</name>
        <dbReference type="ChEBI" id="CHEBI:58437"/>
    </ligand>
</feature>
<feature type="binding site" evidence="1 2 8 12">
    <location>
        <position position="160"/>
    </location>
    <ligand>
        <name>ATP</name>
        <dbReference type="ChEBI" id="CHEBI:30616"/>
    </ligand>
</feature>
<feature type="binding site" evidence="1 2 10 11">
    <location>
        <position position="165"/>
    </location>
    <ligand>
        <name>Mg(2+)</name>
        <dbReference type="ChEBI" id="CHEBI:18420"/>
    </ligand>
</feature>
<feature type="binding site" evidence="1 2 10 11">
    <location>
        <position position="173"/>
    </location>
    <ligand>
        <name>deamido-NAD(+)</name>
        <dbReference type="ChEBI" id="CHEBI:58437"/>
    </ligand>
</feature>
<feature type="binding site" evidence="1 2 10">
    <location>
        <position position="180"/>
    </location>
    <ligand>
        <name>deamido-NAD(+)</name>
        <dbReference type="ChEBI" id="CHEBI:58437"/>
    </ligand>
</feature>
<feature type="binding site" evidence="1 2 12">
    <location>
        <position position="189"/>
    </location>
    <ligand>
        <name>ATP</name>
        <dbReference type="ChEBI" id="CHEBI:30616"/>
    </ligand>
</feature>
<feature type="binding site" evidence="1">
    <location>
        <position position="211"/>
    </location>
    <ligand>
        <name>ATP</name>
        <dbReference type="ChEBI" id="CHEBI:30616"/>
    </ligand>
</feature>
<feature type="binding site" evidence="1 2 10 11">
    <location>
        <begin position="260"/>
        <end position="261"/>
    </location>
    <ligand>
        <name>deamido-NAD(+)</name>
        <dbReference type="ChEBI" id="CHEBI:58437"/>
    </ligand>
</feature>
<feature type="sequence conflict" description="In Ref. 1; AAA79852." evidence="7" ref="1">
    <original>AKPQINAEEEIRRSVDFLK</original>
    <variation>ENRRLMLKRKFVVVSISE</variation>
    <location>
        <begin position="13"/>
        <end position="31"/>
    </location>
</feature>
<feature type="helix" evidence="13">
    <location>
        <begin position="3"/>
        <end position="11"/>
    </location>
</feature>
<feature type="helix" evidence="13">
    <location>
        <begin position="19"/>
        <end position="36"/>
    </location>
</feature>
<feature type="strand" evidence="13">
    <location>
        <begin position="42"/>
        <end position="46"/>
    </location>
</feature>
<feature type="helix" evidence="13">
    <location>
        <begin position="51"/>
        <end position="71"/>
    </location>
</feature>
<feature type="strand" evidence="13">
    <location>
        <begin position="77"/>
        <end position="82"/>
    </location>
</feature>
<feature type="strand" evidence="13">
    <location>
        <begin position="85"/>
        <end position="87"/>
    </location>
</feature>
<feature type="helix" evidence="13">
    <location>
        <begin position="91"/>
        <end position="101"/>
    </location>
</feature>
<feature type="strand" evidence="13">
    <location>
        <begin position="104"/>
        <end position="108"/>
    </location>
</feature>
<feature type="helix" evidence="13">
    <location>
        <begin position="112"/>
        <end position="125"/>
    </location>
</feature>
<feature type="helix" evidence="13">
    <location>
        <begin position="131"/>
        <end position="152"/>
    </location>
</feature>
<feature type="strand" evidence="13">
    <location>
        <begin position="155"/>
        <end position="158"/>
    </location>
</feature>
<feature type="helix" evidence="13">
    <location>
        <begin position="163"/>
        <end position="166"/>
    </location>
</feature>
<feature type="turn" evidence="13">
    <location>
        <begin position="167"/>
        <end position="169"/>
    </location>
</feature>
<feature type="turn" evidence="13">
    <location>
        <begin position="173"/>
        <end position="177"/>
    </location>
</feature>
<feature type="turn" evidence="13">
    <location>
        <begin position="183"/>
        <end position="186"/>
    </location>
</feature>
<feature type="helix" evidence="13">
    <location>
        <begin position="189"/>
        <end position="198"/>
    </location>
</feature>
<feature type="helix" evidence="13">
    <location>
        <begin position="203"/>
        <end position="205"/>
    </location>
</feature>
<feature type="helix" evidence="13">
    <location>
        <begin position="224"/>
        <end position="227"/>
    </location>
</feature>
<feature type="helix" evidence="13">
    <location>
        <begin position="231"/>
        <end position="238"/>
    </location>
</feature>
<feature type="helix" evidence="13">
    <location>
        <begin position="245"/>
        <end position="257"/>
    </location>
</feature>
<feature type="helix" evidence="13">
    <location>
        <begin position="259"/>
        <end position="262"/>
    </location>
</feature>
<feature type="helix" evidence="13">
    <location>
        <begin position="272"/>
        <end position="274"/>
    </location>
</feature>